<dbReference type="EMBL" id="AL123456">
    <property type="protein sequence ID" value="CCP46478.1"/>
    <property type="molecule type" value="Genomic_DNA"/>
</dbReference>
<dbReference type="RefSeq" id="NP_218172.1">
    <property type="nucleotide sequence ID" value="NC_000962.3"/>
</dbReference>
<dbReference type="RefSeq" id="WP_010886180.1">
    <property type="nucleotide sequence ID" value="NC_000962.3"/>
</dbReference>
<dbReference type="STRING" id="83332.Rv3655c"/>
<dbReference type="PaxDb" id="83332-Rv3655c"/>
<dbReference type="GeneID" id="885614"/>
<dbReference type="KEGG" id="mtu:Rv3655c"/>
<dbReference type="PATRIC" id="fig|83332.12.peg.4075"/>
<dbReference type="TubercuList" id="Rv3655c"/>
<dbReference type="eggNOG" id="ENOG5033A2X">
    <property type="taxonomic scope" value="Bacteria"/>
</dbReference>
<dbReference type="InParanoid" id="O69623"/>
<dbReference type="OrthoDB" id="4481209at2"/>
<dbReference type="Reactome" id="R-HSA-9635465">
    <property type="pathway name" value="Suppression of apoptosis"/>
</dbReference>
<dbReference type="Proteomes" id="UP000001584">
    <property type="component" value="Chromosome"/>
</dbReference>
<dbReference type="GO" id="GO:0005829">
    <property type="term" value="C:cytosol"/>
    <property type="evidence" value="ECO:0000304"/>
    <property type="project" value="Reactome"/>
</dbReference>
<dbReference type="GO" id="GO:0005576">
    <property type="term" value="C:extracellular region"/>
    <property type="evidence" value="ECO:0007669"/>
    <property type="project" value="UniProtKB-SubCell"/>
</dbReference>
<dbReference type="GO" id="GO:0030430">
    <property type="term" value="C:host cell cytoplasm"/>
    <property type="evidence" value="ECO:0007669"/>
    <property type="project" value="UniProtKB-SubCell"/>
</dbReference>
<dbReference type="GO" id="GO:0033668">
    <property type="term" value="P:symbiont-mediated suppression of host apoptosis"/>
    <property type="evidence" value="ECO:0000314"/>
    <property type="project" value="MTBBASE"/>
</dbReference>
<dbReference type="InterPro" id="IPR049790">
    <property type="entry name" value="Rv3655c/TadE"/>
</dbReference>
<dbReference type="NCBIfam" id="NF041390">
    <property type="entry name" value="TadE_Rv3655c"/>
    <property type="match status" value="1"/>
</dbReference>
<evidence type="ECO:0000255" key="1"/>
<evidence type="ECO:0000269" key="2">
    <source>
    </source>
</evidence>
<evidence type="ECO:0000305" key="3">
    <source>
    </source>
</evidence>
<evidence type="ECO:0000312" key="4">
    <source>
        <dbReference type="EMBL" id="CCP46478.1"/>
    </source>
</evidence>
<proteinExistence type="evidence at protein level"/>
<gene>
    <name evidence="4" type="ordered locus">Rv3655c</name>
</gene>
<reference key="1">
    <citation type="journal article" date="1998" name="Nature">
        <title>Deciphering the biology of Mycobacterium tuberculosis from the complete genome sequence.</title>
        <authorList>
            <person name="Cole S.T."/>
            <person name="Brosch R."/>
            <person name="Parkhill J."/>
            <person name="Garnier T."/>
            <person name="Churcher C.M."/>
            <person name="Harris D.E."/>
            <person name="Gordon S.V."/>
            <person name="Eiglmeier K."/>
            <person name="Gas S."/>
            <person name="Barry C.E. III"/>
            <person name="Tekaia F."/>
            <person name="Badcock K."/>
            <person name="Basham D."/>
            <person name="Brown D."/>
            <person name="Chillingworth T."/>
            <person name="Connor R."/>
            <person name="Davies R.M."/>
            <person name="Devlin K."/>
            <person name="Feltwell T."/>
            <person name="Gentles S."/>
            <person name="Hamlin N."/>
            <person name="Holroyd S."/>
            <person name="Hornsby T."/>
            <person name="Jagels K."/>
            <person name="Krogh A."/>
            <person name="McLean J."/>
            <person name="Moule S."/>
            <person name="Murphy L.D."/>
            <person name="Oliver S."/>
            <person name="Osborne J."/>
            <person name="Quail M.A."/>
            <person name="Rajandream M.A."/>
            <person name="Rogers J."/>
            <person name="Rutter S."/>
            <person name="Seeger K."/>
            <person name="Skelton S."/>
            <person name="Squares S."/>
            <person name="Squares R."/>
            <person name="Sulston J.E."/>
            <person name="Taylor K."/>
            <person name="Whitehead S."/>
            <person name="Barrell B.G."/>
        </authorList>
    </citation>
    <scope>NUCLEOTIDE SEQUENCE [LARGE SCALE GENOMIC DNA]</scope>
    <source>
        <strain>ATCC 25618 / H37Rv</strain>
    </source>
</reference>
<reference key="2">
    <citation type="journal article" date="2010" name="PLoS ONE">
        <title>Secreted Mycobacterium tuberculosis Rv3654c and Rv3655c proteins participate in the suppression of macrophage apoptosis.</title>
        <authorList>
            <person name="Danelishvili L."/>
            <person name="Yamazaki Y."/>
            <person name="Selker J."/>
            <person name="Bermudez L.E."/>
        </authorList>
    </citation>
    <scope>FUNCTION</scope>
    <scope>INDUCTION</scope>
    <scope>SUBCELLULAR LOCATION</scope>
    <scope>INTERACTION WITH HUMAN RNF213</scope>
    <source>
        <strain>ATCC 25618 / H37Rv</strain>
    </source>
</reference>
<sequence length="125" mass="13007">MEAALAIATLVLVLVLCLAGVTAVSMQVRCIDAAREAARLAARGDVRSATDVARSIAPRAALVQVHRDGEFVVATVTAHSNLLPTLDIAARAISVAEPGSTAARPPCLPSRWSRCCCASPVRVHI</sequence>
<name>API2_MYCTU</name>
<comment type="function">
    <text evidence="2">Effector protein that participates in the suppression of macrophage apoptosis by blocking the extrinsic pathway. Interferes with caspase-8 activation and binds to the host E3 ubiquitin-protein ligase RNF213, whose fusion partners have anti-apoptotic function.</text>
</comment>
<comment type="subunit">
    <text evidence="2">Interacts with human E3 ubiquitin-protein ligase RNF213.</text>
</comment>
<comment type="subcellular location">
    <subcellularLocation>
        <location evidence="2">Secreted</location>
    </subcellularLocation>
    <subcellularLocation>
        <location evidence="2">Host cytoplasm</location>
    </subcellularLocation>
    <text evidence="2">Is secreted into the macrophage cytoplasm. Might be secreted via a type IV pili apparatus that seems to be encoded in the same operon.</text>
</comment>
<comment type="induction">
    <text evidence="2">Component of the Rv3654c-Rv3660c operon that is highly up-regulated during M.tuberculosis infection of macrophages.</text>
</comment>
<feature type="signal peptide" evidence="1">
    <location>
        <begin position="1"/>
        <end position="33"/>
    </location>
</feature>
<feature type="chain" id="PRO_0000438184" description="Apoptosis inhibitor Rv3655c">
    <location>
        <begin position="34"/>
        <end position="125"/>
    </location>
</feature>
<keyword id="KW-1035">Host cytoplasm</keyword>
<keyword id="KW-1185">Reference proteome</keyword>
<keyword id="KW-0964">Secreted</keyword>
<keyword id="KW-0732">Signal</keyword>
<keyword id="KW-0843">Virulence</keyword>
<protein>
    <recommendedName>
        <fullName evidence="3">Apoptosis inhibitor Rv3655c</fullName>
    </recommendedName>
</protein>
<organism>
    <name type="scientific">Mycobacterium tuberculosis (strain ATCC 25618 / H37Rv)</name>
    <dbReference type="NCBI Taxonomy" id="83332"/>
    <lineage>
        <taxon>Bacteria</taxon>
        <taxon>Bacillati</taxon>
        <taxon>Actinomycetota</taxon>
        <taxon>Actinomycetes</taxon>
        <taxon>Mycobacteriales</taxon>
        <taxon>Mycobacteriaceae</taxon>
        <taxon>Mycobacterium</taxon>
        <taxon>Mycobacterium tuberculosis complex</taxon>
    </lineage>
</organism>
<accession>O69623</accession>